<comment type="function">
    <text evidence="3 4 7 8">Transcriptional repressor that binds the consensus promoter sequence 5'-[AT]GATAA-3' during iron-replete conditions to down-regulate transcription of target genes (PubMed:11956219, PubMed:25733668). Represses the expression of the iron transporter fio1 in response to high iron concentrations (PubMed:11956219, PubMed:25733668). Also represses the expression of str1, str2 and str3 (PubMed:12888492, PubMed:29549126). Represses the expression of shu1 in presence of iron (PubMed:25733668).</text>
</comment>
<comment type="activity regulation">
    <text evidence="7">Activated by iron.</text>
</comment>
<comment type="subunit">
    <text evidence="5">Interacts with tup11.</text>
</comment>
<comment type="subcellular location">
    <subcellularLocation>
        <location evidence="12">Nucleus</location>
    </subcellularLocation>
</comment>
<organism>
    <name type="scientific">Schizosaccharomyces pombe (strain 972 / ATCC 24843)</name>
    <name type="common">Fission yeast</name>
    <dbReference type="NCBI Taxonomy" id="284812"/>
    <lineage>
        <taxon>Eukaryota</taxon>
        <taxon>Fungi</taxon>
        <taxon>Dikarya</taxon>
        <taxon>Ascomycota</taxon>
        <taxon>Taphrinomycotina</taxon>
        <taxon>Schizosaccharomycetes</taxon>
        <taxon>Schizosaccharomycetales</taxon>
        <taxon>Schizosaccharomycetaceae</taxon>
        <taxon>Schizosaccharomyces</taxon>
    </lineage>
</organism>
<evidence type="ECO:0000255" key="1">
    <source>
        <dbReference type="PROSITE-ProRule" id="PRU00094"/>
    </source>
</evidence>
<evidence type="ECO:0000256" key="2">
    <source>
        <dbReference type="SAM" id="MobiDB-lite"/>
    </source>
</evidence>
<evidence type="ECO:0000269" key="3">
    <source>
    </source>
</evidence>
<evidence type="ECO:0000269" key="4">
    <source>
    </source>
</evidence>
<evidence type="ECO:0000269" key="5">
    <source>
    </source>
</evidence>
<evidence type="ECO:0000269" key="6">
    <source>
    </source>
</evidence>
<evidence type="ECO:0000269" key="7">
    <source>
    </source>
</evidence>
<evidence type="ECO:0000269" key="8">
    <source>
    </source>
</evidence>
<evidence type="ECO:0000303" key="9">
    <source>
    </source>
</evidence>
<evidence type="ECO:0000303" key="10">
    <source>
    </source>
</evidence>
<evidence type="ECO:0000305" key="11"/>
<evidence type="ECO:0000305" key="12">
    <source>
    </source>
</evidence>
<evidence type="ECO:0000312" key="13">
    <source>
        <dbReference type="PomBase" id="SPAC23E2.01"/>
    </source>
</evidence>
<dbReference type="EMBL" id="AY099027">
    <property type="protein sequence ID" value="AAM29187.1"/>
    <property type="molecule type" value="Genomic_DNA"/>
</dbReference>
<dbReference type="EMBL" id="AJ457978">
    <property type="protein sequence ID" value="CAD30004.1"/>
    <property type="molecule type" value="Genomic_DNA"/>
</dbReference>
<dbReference type="EMBL" id="L29051">
    <property type="protein sequence ID" value="AAB38022.1"/>
    <property type="molecule type" value="Genomic_DNA"/>
</dbReference>
<dbReference type="EMBL" id="CU329670">
    <property type="protein sequence ID" value="CAA93113.1"/>
    <property type="molecule type" value="Genomic_DNA"/>
</dbReference>
<dbReference type="PIR" id="T38291">
    <property type="entry name" value="T38291"/>
</dbReference>
<dbReference type="PIR" id="T43298">
    <property type="entry name" value="T43298"/>
</dbReference>
<dbReference type="RefSeq" id="NP_592936.1">
    <property type="nucleotide sequence ID" value="NM_001018337.2"/>
</dbReference>
<dbReference type="BioGRID" id="278023">
    <property type="interactions" value="68"/>
</dbReference>
<dbReference type="FunCoup" id="Q10134">
    <property type="interactions" value="72"/>
</dbReference>
<dbReference type="IntAct" id="Q10134">
    <property type="interactions" value="1"/>
</dbReference>
<dbReference type="STRING" id="284812.Q10134"/>
<dbReference type="iPTMnet" id="Q10134"/>
<dbReference type="PaxDb" id="4896-SPAC23E2.01.1"/>
<dbReference type="EnsemblFungi" id="SPAC23E2.01.1">
    <property type="protein sequence ID" value="SPAC23E2.01.1:pep"/>
    <property type="gene ID" value="SPAC23E2.01"/>
</dbReference>
<dbReference type="GeneID" id="2541522"/>
<dbReference type="KEGG" id="spo:2541522"/>
<dbReference type="PomBase" id="SPAC23E2.01">
    <property type="gene designation" value="fep1"/>
</dbReference>
<dbReference type="VEuPathDB" id="FungiDB:SPAC23E2.01"/>
<dbReference type="eggNOG" id="KOG1601">
    <property type="taxonomic scope" value="Eukaryota"/>
</dbReference>
<dbReference type="HOGENOM" id="CLU_524924_0_0_1"/>
<dbReference type="InParanoid" id="Q10134"/>
<dbReference type="OMA" id="WRRGPDN"/>
<dbReference type="PhylomeDB" id="Q10134"/>
<dbReference type="Reactome" id="R-SPO-9018519">
    <property type="pathway name" value="Estrogen-dependent gene expression"/>
</dbReference>
<dbReference type="PRO" id="PR:Q10134"/>
<dbReference type="Proteomes" id="UP000002485">
    <property type="component" value="Chromosome I"/>
</dbReference>
<dbReference type="GO" id="GO:0000785">
    <property type="term" value="C:chromatin"/>
    <property type="evidence" value="ECO:0000314"/>
    <property type="project" value="PomBase"/>
</dbReference>
<dbReference type="GO" id="GO:0005634">
    <property type="term" value="C:nucleus"/>
    <property type="evidence" value="ECO:0000314"/>
    <property type="project" value="PomBase"/>
</dbReference>
<dbReference type="GO" id="GO:0051537">
    <property type="term" value="F:2 iron, 2 sulfur cluster binding"/>
    <property type="evidence" value="ECO:0000314"/>
    <property type="project" value="PomBase"/>
</dbReference>
<dbReference type="GO" id="GO:0000981">
    <property type="term" value="F:DNA-binding transcription factor activity, RNA polymerase II-specific"/>
    <property type="evidence" value="ECO:0000318"/>
    <property type="project" value="GO_Central"/>
</dbReference>
<dbReference type="GO" id="GO:0001227">
    <property type="term" value="F:DNA-binding transcription repressor activity, RNA polymerase II-specific"/>
    <property type="evidence" value="ECO:0000314"/>
    <property type="project" value="PomBase"/>
</dbReference>
<dbReference type="GO" id="GO:0003690">
    <property type="term" value="F:double-stranded DNA binding"/>
    <property type="evidence" value="ECO:0000314"/>
    <property type="project" value="PomBase"/>
</dbReference>
<dbReference type="GO" id="GO:0005506">
    <property type="term" value="F:iron ion binding"/>
    <property type="evidence" value="ECO:0000314"/>
    <property type="project" value="PomBase"/>
</dbReference>
<dbReference type="GO" id="GO:0140482">
    <property type="term" value="F:iron sensor activity"/>
    <property type="evidence" value="ECO:0000314"/>
    <property type="project" value="PomBase"/>
</dbReference>
<dbReference type="GO" id="GO:0051536">
    <property type="term" value="F:iron-sulfur cluster binding"/>
    <property type="evidence" value="ECO:0000314"/>
    <property type="project" value="PomBase"/>
</dbReference>
<dbReference type="GO" id="GO:0000978">
    <property type="term" value="F:RNA polymerase II cis-regulatory region sequence-specific DNA binding"/>
    <property type="evidence" value="ECO:0000314"/>
    <property type="project" value="PomBase"/>
</dbReference>
<dbReference type="GO" id="GO:0008270">
    <property type="term" value="F:zinc ion binding"/>
    <property type="evidence" value="ECO:0000314"/>
    <property type="project" value="PomBase"/>
</dbReference>
<dbReference type="GO" id="GO:0006879">
    <property type="term" value="P:intracellular iron ion homeostasis"/>
    <property type="evidence" value="ECO:0000315"/>
    <property type="project" value="PomBase"/>
</dbReference>
<dbReference type="GO" id="GO:1905569">
    <property type="term" value="P:negative regulation of ferrichrome biosynthetic process"/>
    <property type="evidence" value="ECO:0000315"/>
    <property type="project" value="PomBase"/>
</dbReference>
<dbReference type="GO" id="GO:0000122">
    <property type="term" value="P:negative regulation of transcription by RNA polymerase II"/>
    <property type="evidence" value="ECO:0000315"/>
    <property type="project" value="PomBase"/>
</dbReference>
<dbReference type="GO" id="GO:0045944">
    <property type="term" value="P:positive regulation of transcription by RNA polymerase II"/>
    <property type="evidence" value="ECO:0000318"/>
    <property type="project" value="GO_Central"/>
</dbReference>
<dbReference type="CDD" id="cd00202">
    <property type="entry name" value="ZnF_GATA"/>
    <property type="match status" value="2"/>
</dbReference>
<dbReference type="FunFam" id="3.30.50.10:FF:000007">
    <property type="entry name" value="Nitrogen regulatory AreA, N-terminal"/>
    <property type="match status" value="1"/>
</dbReference>
<dbReference type="Gene3D" id="3.30.50.10">
    <property type="entry name" value="Erythroid Transcription Factor GATA-1, subunit A"/>
    <property type="match status" value="2"/>
</dbReference>
<dbReference type="InterPro" id="IPR039355">
    <property type="entry name" value="Transcription_factor_GATA"/>
</dbReference>
<dbReference type="InterPro" id="IPR000679">
    <property type="entry name" value="Znf_GATA"/>
</dbReference>
<dbReference type="InterPro" id="IPR013088">
    <property type="entry name" value="Znf_NHR/GATA"/>
</dbReference>
<dbReference type="PANTHER" id="PTHR10071:SF281">
    <property type="entry name" value="BOX A-BINDING FACTOR-RELATED"/>
    <property type="match status" value="1"/>
</dbReference>
<dbReference type="PANTHER" id="PTHR10071">
    <property type="entry name" value="TRANSCRIPTION FACTOR GATA FAMILY MEMBER"/>
    <property type="match status" value="1"/>
</dbReference>
<dbReference type="Pfam" id="PF00320">
    <property type="entry name" value="GATA"/>
    <property type="match status" value="2"/>
</dbReference>
<dbReference type="PRINTS" id="PR00619">
    <property type="entry name" value="GATAZNFINGER"/>
</dbReference>
<dbReference type="SMART" id="SM00401">
    <property type="entry name" value="ZnF_GATA"/>
    <property type="match status" value="2"/>
</dbReference>
<dbReference type="SUPFAM" id="SSF57716">
    <property type="entry name" value="Glucocorticoid receptor-like (DNA-binding domain)"/>
    <property type="match status" value="2"/>
</dbReference>
<dbReference type="PROSITE" id="PS00344">
    <property type="entry name" value="GATA_ZN_FINGER_1"/>
    <property type="match status" value="2"/>
</dbReference>
<dbReference type="PROSITE" id="PS50114">
    <property type="entry name" value="GATA_ZN_FINGER_2"/>
    <property type="match status" value="2"/>
</dbReference>
<sequence>MAAKPAPFGQSCSNCHKTTTSLWRRGPDNSLLCNACGLYQKHRKHARPVKSEDLKDISPLIQQVCKNGTCAGDGFCNGTGGSASCTGCPALNNRIRSLNASKSQSGRKSLSPNPSSVPSSTETKASPTPLESKPQIVSDTTTETSNGTSRRRSSHNQHEDSSPPHEPSVTFCQNCATTNTPLWRRDESGNPICNACGLYYKIHGVHRPVTMKKAIIKRRKRLVFNGNANESQHNLKRMSSGDSGSSVKQQSTRDGPFSKSFPNGNGHASGNSGEGLAEHGMNTGVLPPASTFPSYNSNFTGFLPSSFNPSPLMTLSRLAAGEPDNNGKVYYSYGPTQEQSILPLPENKHEGLPPYQNEYVPNGIRANQVVYPGQLVAVGNDSSKQLSESTTSNTDNNGVATANQSNPLGMKFHLPPILPVGESVCLPPRTSAKPRIAEGIASLLNPEEPPSNSDKQPSMSNGPKSEVSPSQSQQAPLIQSSTSPVSLQFPPEVQGSNVDKRNYALNVLSQLRSQHDLMIQELHNLNQHIQQIDEWLRSSDNENMASEHIKSSTPAVVASGALQT</sequence>
<name>FEP1_SCHPO</name>
<gene>
    <name evidence="9" type="primary">fep1</name>
    <name evidence="10" type="synonym">gaf2</name>
    <name evidence="13" type="ORF">SPAC23E2.01</name>
</gene>
<feature type="chain" id="PRO_0000083476" description="Iron-sensing transcriptional repressor">
    <location>
        <begin position="1"/>
        <end position="564"/>
    </location>
</feature>
<feature type="zinc finger region" description="GATA-type 1" evidence="1">
    <location>
        <begin position="12"/>
        <end position="36"/>
    </location>
</feature>
<feature type="zinc finger region" description="GATA-type 2" evidence="1">
    <location>
        <begin position="172"/>
        <end position="196"/>
    </location>
</feature>
<feature type="region of interest" description="Disordered" evidence="2">
    <location>
        <begin position="100"/>
        <end position="170"/>
    </location>
</feature>
<feature type="region of interest" description="Disordered" evidence="2">
    <location>
        <begin position="226"/>
        <end position="285"/>
    </location>
</feature>
<feature type="region of interest" description="Disordered" evidence="2">
    <location>
        <begin position="381"/>
        <end position="409"/>
    </location>
</feature>
<feature type="region of interest" description="Disordered" evidence="2">
    <location>
        <begin position="443"/>
        <end position="496"/>
    </location>
</feature>
<feature type="compositionally biased region" description="Low complexity" evidence="2">
    <location>
        <begin position="109"/>
        <end position="120"/>
    </location>
</feature>
<feature type="compositionally biased region" description="Polar residues" evidence="2">
    <location>
        <begin position="135"/>
        <end position="148"/>
    </location>
</feature>
<feature type="compositionally biased region" description="Polar residues" evidence="2">
    <location>
        <begin position="240"/>
        <end position="253"/>
    </location>
</feature>
<feature type="compositionally biased region" description="Polar residues" evidence="2">
    <location>
        <begin position="260"/>
        <end position="271"/>
    </location>
</feature>
<feature type="compositionally biased region" description="Polar residues" evidence="2">
    <location>
        <begin position="381"/>
        <end position="407"/>
    </location>
</feature>
<feature type="compositionally biased region" description="Polar residues" evidence="2">
    <location>
        <begin position="450"/>
        <end position="486"/>
    </location>
</feature>
<feature type="modified residue" description="Phosphoserine" evidence="6">
    <location>
        <position position="109"/>
    </location>
</feature>
<feature type="sequence conflict" description="In Ref. 2; AAB38022." evidence="11" ref="2">
    <original>L</original>
    <variation>K</variation>
    <location>
        <position position="182"/>
    </location>
</feature>
<proteinExistence type="evidence at protein level"/>
<keyword id="KW-0238">DNA-binding</keyword>
<keyword id="KW-0479">Metal-binding</keyword>
<keyword id="KW-0539">Nucleus</keyword>
<keyword id="KW-0597">Phosphoprotein</keyword>
<keyword id="KW-1185">Reference proteome</keyword>
<keyword id="KW-0677">Repeat</keyword>
<keyword id="KW-0804">Transcription</keyword>
<keyword id="KW-0805">Transcription regulation</keyword>
<keyword id="KW-0862">Zinc</keyword>
<keyword id="KW-0863">Zinc-finger</keyword>
<accession>Q10134</accession>
<reference key="1">
    <citation type="journal article" date="2002" name="J. Biol. Chem.">
        <title>Fep1, an iron sensor regulating iron transporter gene expression in Schizosaccharomyces pombe.</title>
        <authorList>
            <person name="Pelletier B."/>
            <person name="Beaudoin J."/>
            <person name="Mukai Y."/>
            <person name="Labbe S."/>
        </authorList>
    </citation>
    <scope>NUCLEOTIDE SEQUENCE [GENOMIC DNA]</scope>
    <scope>FUNCTION</scope>
    <scope>SUBCELLULAR LOCATION</scope>
</reference>
<reference key="2">
    <citation type="journal article" date="1996" name="Biochem. Mol. Biol. Int.">
        <title>Molecular cloning of GAF2, a Schizosaccharomyces pombe GATA factor, which has two zinc-finger sequences.</title>
        <authorList>
            <person name="Hoe K.-L."/>
            <person name="Won M.-S."/>
            <person name="Yoo O.-J.J."/>
            <person name="Yoo H.-S."/>
        </authorList>
    </citation>
    <scope>NUCLEOTIDE SEQUENCE [GENOMIC DNA]</scope>
</reference>
<reference key="3">
    <citation type="journal article" date="2002" name="Nature">
        <title>The genome sequence of Schizosaccharomyces pombe.</title>
        <authorList>
            <person name="Wood V."/>
            <person name="Gwilliam R."/>
            <person name="Rajandream M.A."/>
            <person name="Lyne M.H."/>
            <person name="Lyne R."/>
            <person name="Stewart A."/>
            <person name="Sgouros J.G."/>
            <person name="Peat N."/>
            <person name="Hayles J."/>
            <person name="Baker S.G."/>
            <person name="Basham D."/>
            <person name="Bowman S."/>
            <person name="Brooks K."/>
            <person name="Brown D."/>
            <person name="Brown S."/>
            <person name="Chillingworth T."/>
            <person name="Churcher C.M."/>
            <person name="Collins M."/>
            <person name="Connor R."/>
            <person name="Cronin A."/>
            <person name="Davis P."/>
            <person name="Feltwell T."/>
            <person name="Fraser A."/>
            <person name="Gentles S."/>
            <person name="Goble A."/>
            <person name="Hamlin N."/>
            <person name="Harris D.E."/>
            <person name="Hidalgo J."/>
            <person name="Hodgson G."/>
            <person name="Holroyd S."/>
            <person name="Hornsby T."/>
            <person name="Howarth S."/>
            <person name="Huckle E.J."/>
            <person name="Hunt S."/>
            <person name="Jagels K."/>
            <person name="James K.D."/>
            <person name="Jones L."/>
            <person name="Jones M."/>
            <person name="Leather S."/>
            <person name="McDonald S."/>
            <person name="McLean J."/>
            <person name="Mooney P."/>
            <person name="Moule S."/>
            <person name="Mungall K.L."/>
            <person name="Murphy L.D."/>
            <person name="Niblett D."/>
            <person name="Odell C."/>
            <person name="Oliver K."/>
            <person name="O'Neil S."/>
            <person name="Pearson D."/>
            <person name="Quail M.A."/>
            <person name="Rabbinowitsch E."/>
            <person name="Rutherford K.M."/>
            <person name="Rutter S."/>
            <person name="Saunders D."/>
            <person name="Seeger K."/>
            <person name="Sharp S."/>
            <person name="Skelton J."/>
            <person name="Simmonds M.N."/>
            <person name="Squares R."/>
            <person name="Squares S."/>
            <person name="Stevens K."/>
            <person name="Taylor K."/>
            <person name="Taylor R.G."/>
            <person name="Tivey A."/>
            <person name="Walsh S.V."/>
            <person name="Warren T."/>
            <person name="Whitehead S."/>
            <person name="Woodward J.R."/>
            <person name="Volckaert G."/>
            <person name="Aert R."/>
            <person name="Robben J."/>
            <person name="Grymonprez B."/>
            <person name="Weltjens I."/>
            <person name="Vanstreels E."/>
            <person name="Rieger M."/>
            <person name="Schaefer M."/>
            <person name="Mueller-Auer S."/>
            <person name="Gabel C."/>
            <person name="Fuchs M."/>
            <person name="Duesterhoeft A."/>
            <person name="Fritzc C."/>
            <person name="Holzer E."/>
            <person name="Moestl D."/>
            <person name="Hilbert H."/>
            <person name="Borzym K."/>
            <person name="Langer I."/>
            <person name="Beck A."/>
            <person name="Lehrach H."/>
            <person name="Reinhardt R."/>
            <person name="Pohl T.M."/>
            <person name="Eger P."/>
            <person name="Zimmermann W."/>
            <person name="Wedler H."/>
            <person name="Wambutt R."/>
            <person name="Purnelle B."/>
            <person name="Goffeau A."/>
            <person name="Cadieu E."/>
            <person name="Dreano S."/>
            <person name="Gloux S."/>
            <person name="Lelaure V."/>
            <person name="Mottier S."/>
            <person name="Galibert F."/>
            <person name="Aves S.J."/>
            <person name="Xiang Z."/>
            <person name="Hunt C."/>
            <person name="Moore K."/>
            <person name="Hurst S.M."/>
            <person name="Lucas M."/>
            <person name="Rochet M."/>
            <person name="Gaillardin C."/>
            <person name="Tallada V.A."/>
            <person name="Garzon A."/>
            <person name="Thode G."/>
            <person name="Daga R.R."/>
            <person name="Cruzado L."/>
            <person name="Jimenez J."/>
            <person name="Sanchez M."/>
            <person name="del Rey F."/>
            <person name="Benito J."/>
            <person name="Dominguez A."/>
            <person name="Revuelta J.L."/>
            <person name="Moreno S."/>
            <person name="Armstrong J."/>
            <person name="Forsburg S.L."/>
            <person name="Cerutti L."/>
            <person name="Lowe T."/>
            <person name="McCombie W.R."/>
            <person name="Paulsen I."/>
            <person name="Potashkin J."/>
            <person name="Shpakovski G.V."/>
            <person name="Ussery D."/>
            <person name="Barrell B.G."/>
            <person name="Nurse P."/>
        </authorList>
    </citation>
    <scope>NUCLEOTIDE SEQUENCE [LARGE SCALE GENOMIC DNA]</scope>
    <source>
        <strain>972 / ATCC 24843</strain>
    </source>
</reference>
<reference key="4">
    <citation type="journal article" date="2004" name="J. Biol. Chem.">
        <title>The Schizosaccharomyces pombe corepressor Tup11 interacts with the iron-responsive transcription factor Fep1.</title>
        <authorList>
            <person name="Znaidi S."/>
            <person name="Pelletier B."/>
            <person name="Mukai Y."/>
            <person name="Labbe S."/>
        </authorList>
    </citation>
    <scope>INTERACTION WITH TUP11</scope>
</reference>
<reference key="5">
    <citation type="journal article" date="2003" name="Nucleic Acids Res.">
        <title>Fep1 represses expression of the fission yeast Schizosaccharomyces pombe siderophore-iron transport system.</title>
        <authorList>
            <person name="Pelletier B."/>
            <person name="Beaudoin J."/>
            <person name="Philpott C.C."/>
            <person name="Labbe S."/>
        </authorList>
    </citation>
    <scope>FUNCTION</scope>
</reference>
<reference key="6">
    <citation type="journal article" date="2008" name="J. Proteome Res.">
        <title>Phosphoproteome analysis of fission yeast.</title>
        <authorList>
            <person name="Wilson-Grady J.T."/>
            <person name="Villen J."/>
            <person name="Gygi S.P."/>
        </authorList>
    </citation>
    <scope>PHOSPHORYLATION [LARGE SCALE ANALYSIS] AT SER-109</scope>
    <scope>IDENTIFICATION BY MASS SPECTROMETRY</scope>
</reference>
<reference key="7">
    <citation type="journal article" date="2015" name="J. Biol. Chem.">
        <title>Shu1 is a cell-surface protein involved in iron acquisition from heme in Schizosaccharomyces pombe.</title>
        <authorList>
            <person name="Mourer T."/>
            <person name="Jacques J.F."/>
            <person name="Brault A."/>
            <person name="Bisaillon M."/>
            <person name="Labbe S."/>
        </authorList>
    </citation>
    <scope>FUNCTION</scope>
    <scope>ACTIVITY REGULATION</scope>
</reference>
<reference key="8">
    <citation type="journal article" date="2018" name="J. Biol. Chem.">
        <title>The major facilitator transporter Str3 is required for low-affinity heme acquisition in Schizosaccharomyces pombe.</title>
        <authorList>
            <person name="Normant V."/>
            <person name="Mourer T."/>
            <person name="Labbe S."/>
        </authorList>
    </citation>
    <scope>FUNCTION</scope>
</reference>
<protein>
    <recommendedName>
        <fullName evidence="11">Iron-sensing transcriptional repressor</fullName>
    </recommendedName>
    <alternativeName>
        <fullName>Transcription factor gaf2</fullName>
        <shortName>Gaf-2</shortName>
    </alternativeName>
</protein>